<reference key="1">
    <citation type="journal article" date="2003" name="Proc. Natl. Acad. Sci. U.S.A.">
        <title>Complete genome sequence of the marine planctomycete Pirellula sp. strain 1.</title>
        <authorList>
            <person name="Gloeckner F.O."/>
            <person name="Kube M."/>
            <person name="Bauer M."/>
            <person name="Teeling H."/>
            <person name="Lombardot T."/>
            <person name="Ludwig W."/>
            <person name="Gade D."/>
            <person name="Beck A."/>
            <person name="Borzym K."/>
            <person name="Heitmann K."/>
            <person name="Rabus R."/>
            <person name="Schlesner H."/>
            <person name="Amann R."/>
            <person name="Reinhardt R."/>
        </authorList>
    </citation>
    <scope>NUCLEOTIDE SEQUENCE [LARGE SCALE GENOMIC DNA]</scope>
    <source>
        <strain>DSM 10527 / NCIMB 13988 / SH1</strain>
    </source>
</reference>
<proteinExistence type="inferred from homology"/>
<name>RS14Z_RHOBA</name>
<sequence length="61" mass="6994">MASKSKVAKALRTPKFSTRKENRCKFCGRPRSVYRKFGLCRICFRENANAGLIPGVRKSSW</sequence>
<protein>
    <recommendedName>
        <fullName evidence="1">Small ribosomal subunit protein uS14</fullName>
    </recommendedName>
    <alternativeName>
        <fullName evidence="2">30S ribosomal protein S14 type Z</fullName>
    </alternativeName>
</protein>
<gene>
    <name evidence="1" type="primary">rpsZ</name>
    <name evidence="1" type="synonym">rpsN</name>
    <name type="ordered locus">RB7854</name>
</gene>
<dbReference type="EMBL" id="BX294146">
    <property type="protein sequence ID" value="CAD75612.1"/>
    <property type="molecule type" value="Genomic_DNA"/>
</dbReference>
<dbReference type="RefSeq" id="NP_868065.1">
    <property type="nucleotide sequence ID" value="NC_005027.1"/>
</dbReference>
<dbReference type="RefSeq" id="WP_007326809.1">
    <property type="nucleotide sequence ID" value="NC_005027.1"/>
</dbReference>
<dbReference type="SMR" id="Q7UN07"/>
<dbReference type="FunCoup" id="Q7UN07">
    <property type="interactions" value="555"/>
</dbReference>
<dbReference type="STRING" id="243090.RB7854"/>
<dbReference type="EnsemblBacteria" id="CAD75612">
    <property type="protein sequence ID" value="CAD75612"/>
    <property type="gene ID" value="RB7854"/>
</dbReference>
<dbReference type="KEGG" id="rba:RB7854"/>
<dbReference type="PATRIC" id="fig|243090.15.peg.3796"/>
<dbReference type="eggNOG" id="COG0199">
    <property type="taxonomic scope" value="Bacteria"/>
</dbReference>
<dbReference type="HOGENOM" id="CLU_139869_3_0_0"/>
<dbReference type="InParanoid" id="Q7UN07"/>
<dbReference type="OrthoDB" id="9810484at2"/>
<dbReference type="Proteomes" id="UP000001025">
    <property type="component" value="Chromosome"/>
</dbReference>
<dbReference type="GO" id="GO:0005737">
    <property type="term" value="C:cytoplasm"/>
    <property type="evidence" value="ECO:0007669"/>
    <property type="project" value="UniProtKB-ARBA"/>
</dbReference>
<dbReference type="GO" id="GO:0015935">
    <property type="term" value="C:small ribosomal subunit"/>
    <property type="evidence" value="ECO:0000318"/>
    <property type="project" value="GO_Central"/>
</dbReference>
<dbReference type="GO" id="GO:0019843">
    <property type="term" value="F:rRNA binding"/>
    <property type="evidence" value="ECO:0007669"/>
    <property type="project" value="UniProtKB-UniRule"/>
</dbReference>
<dbReference type="GO" id="GO:0003735">
    <property type="term" value="F:structural constituent of ribosome"/>
    <property type="evidence" value="ECO:0000318"/>
    <property type="project" value="GO_Central"/>
</dbReference>
<dbReference type="GO" id="GO:0008270">
    <property type="term" value="F:zinc ion binding"/>
    <property type="evidence" value="ECO:0007669"/>
    <property type="project" value="UniProtKB-UniRule"/>
</dbReference>
<dbReference type="GO" id="GO:0006412">
    <property type="term" value="P:translation"/>
    <property type="evidence" value="ECO:0000318"/>
    <property type="project" value="GO_Central"/>
</dbReference>
<dbReference type="FunFam" id="4.10.830.10:FF:000001">
    <property type="entry name" value="30S ribosomal protein S14 type Z"/>
    <property type="match status" value="1"/>
</dbReference>
<dbReference type="Gene3D" id="4.10.830.10">
    <property type="entry name" value="30s Ribosomal Protein S14, Chain N"/>
    <property type="match status" value="1"/>
</dbReference>
<dbReference type="HAMAP" id="MF_01364_B">
    <property type="entry name" value="Ribosomal_uS14_2_B"/>
    <property type="match status" value="1"/>
</dbReference>
<dbReference type="InterPro" id="IPR001209">
    <property type="entry name" value="Ribosomal_uS14"/>
</dbReference>
<dbReference type="InterPro" id="IPR023053">
    <property type="entry name" value="Ribosomal_uS14_bact"/>
</dbReference>
<dbReference type="InterPro" id="IPR018271">
    <property type="entry name" value="Ribosomal_uS14_CS"/>
</dbReference>
<dbReference type="InterPro" id="IPR043140">
    <property type="entry name" value="Ribosomal_uS14_sf"/>
</dbReference>
<dbReference type="NCBIfam" id="NF005974">
    <property type="entry name" value="PRK08061.1"/>
    <property type="match status" value="1"/>
</dbReference>
<dbReference type="PANTHER" id="PTHR19836">
    <property type="entry name" value="30S RIBOSOMAL PROTEIN S14"/>
    <property type="match status" value="1"/>
</dbReference>
<dbReference type="PANTHER" id="PTHR19836:SF19">
    <property type="entry name" value="SMALL RIBOSOMAL SUBUNIT PROTEIN US14M"/>
    <property type="match status" value="1"/>
</dbReference>
<dbReference type="Pfam" id="PF00253">
    <property type="entry name" value="Ribosomal_S14"/>
    <property type="match status" value="1"/>
</dbReference>
<dbReference type="SUPFAM" id="SSF57716">
    <property type="entry name" value="Glucocorticoid receptor-like (DNA-binding domain)"/>
    <property type="match status" value="1"/>
</dbReference>
<dbReference type="PROSITE" id="PS00527">
    <property type="entry name" value="RIBOSOMAL_S14"/>
    <property type="match status" value="1"/>
</dbReference>
<feature type="chain" id="PRO_0000269130" description="Small ribosomal subunit protein uS14">
    <location>
        <begin position="1"/>
        <end position="61"/>
    </location>
</feature>
<feature type="binding site" evidence="1">
    <location>
        <position position="24"/>
    </location>
    <ligand>
        <name>Zn(2+)</name>
        <dbReference type="ChEBI" id="CHEBI:29105"/>
    </ligand>
</feature>
<feature type="binding site" evidence="1">
    <location>
        <position position="27"/>
    </location>
    <ligand>
        <name>Zn(2+)</name>
        <dbReference type="ChEBI" id="CHEBI:29105"/>
    </ligand>
</feature>
<feature type="binding site" evidence="1">
    <location>
        <position position="40"/>
    </location>
    <ligand>
        <name>Zn(2+)</name>
        <dbReference type="ChEBI" id="CHEBI:29105"/>
    </ligand>
</feature>
<feature type="binding site" evidence="1">
    <location>
        <position position="43"/>
    </location>
    <ligand>
        <name>Zn(2+)</name>
        <dbReference type="ChEBI" id="CHEBI:29105"/>
    </ligand>
</feature>
<comment type="function">
    <text evidence="1">Binds 16S rRNA, required for the assembly of 30S particles and may also be responsible for determining the conformation of the 16S rRNA at the A site.</text>
</comment>
<comment type="cofactor">
    <cofactor evidence="1">
        <name>Zn(2+)</name>
        <dbReference type="ChEBI" id="CHEBI:29105"/>
    </cofactor>
    <text evidence="1">Binds 1 zinc ion per subunit.</text>
</comment>
<comment type="subunit">
    <text evidence="1">Part of the 30S ribosomal subunit. Contacts proteins S3 and S10.</text>
</comment>
<comment type="similarity">
    <text evidence="1">Belongs to the universal ribosomal protein uS14 family. Zinc-binding uS14 subfamily.</text>
</comment>
<accession>Q7UN07</accession>
<evidence type="ECO:0000255" key="1">
    <source>
        <dbReference type="HAMAP-Rule" id="MF_01364"/>
    </source>
</evidence>
<evidence type="ECO:0000305" key="2"/>
<organism>
    <name type="scientific">Rhodopirellula baltica (strain DSM 10527 / NCIMB 13988 / SH1)</name>
    <dbReference type="NCBI Taxonomy" id="243090"/>
    <lineage>
        <taxon>Bacteria</taxon>
        <taxon>Pseudomonadati</taxon>
        <taxon>Planctomycetota</taxon>
        <taxon>Planctomycetia</taxon>
        <taxon>Pirellulales</taxon>
        <taxon>Pirellulaceae</taxon>
        <taxon>Rhodopirellula</taxon>
    </lineage>
</organism>
<keyword id="KW-0479">Metal-binding</keyword>
<keyword id="KW-1185">Reference proteome</keyword>
<keyword id="KW-0687">Ribonucleoprotein</keyword>
<keyword id="KW-0689">Ribosomal protein</keyword>
<keyword id="KW-0694">RNA-binding</keyword>
<keyword id="KW-0699">rRNA-binding</keyword>
<keyword id="KW-0862">Zinc</keyword>